<protein>
    <recommendedName>
        <fullName evidence="1">Aminomethyltransferase</fullName>
        <ecNumber evidence="1">2.1.2.10</ecNumber>
    </recommendedName>
    <alternativeName>
        <fullName evidence="1">Glycine cleavage system T protein</fullName>
    </alternativeName>
</protein>
<name>GCST_CUPNH</name>
<comment type="function">
    <text evidence="1">The glycine cleavage system catalyzes the degradation of glycine.</text>
</comment>
<comment type="catalytic activity">
    <reaction evidence="1">
        <text>N(6)-[(R)-S(8)-aminomethyldihydrolipoyl]-L-lysyl-[protein] + (6S)-5,6,7,8-tetrahydrofolate = N(6)-[(R)-dihydrolipoyl]-L-lysyl-[protein] + (6R)-5,10-methylene-5,6,7,8-tetrahydrofolate + NH4(+)</text>
        <dbReference type="Rhea" id="RHEA:16945"/>
        <dbReference type="Rhea" id="RHEA-COMP:10475"/>
        <dbReference type="Rhea" id="RHEA-COMP:10492"/>
        <dbReference type="ChEBI" id="CHEBI:15636"/>
        <dbReference type="ChEBI" id="CHEBI:28938"/>
        <dbReference type="ChEBI" id="CHEBI:57453"/>
        <dbReference type="ChEBI" id="CHEBI:83100"/>
        <dbReference type="ChEBI" id="CHEBI:83143"/>
        <dbReference type="EC" id="2.1.2.10"/>
    </reaction>
</comment>
<comment type="subunit">
    <text evidence="1">The glycine cleavage system is composed of four proteins: P, T, L and H.</text>
</comment>
<comment type="similarity">
    <text evidence="1">Belongs to the GcvT family.</text>
</comment>
<evidence type="ECO:0000255" key="1">
    <source>
        <dbReference type="HAMAP-Rule" id="MF_00259"/>
    </source>
</evidence>
<organism>
    <name type="scientific">Cupriavidus necator (strain ATCC 17699 / DSM 428 / KCTC 22496 / NCIMB 10442 / H16 / Stanier 337)</name>
    <name type="common">Ralstonia eutropha</name>
    <dbReference type="NCBI Taxonomy" id="381666"/>
    <lineage>
        <taxon>Bacteria</taxon>
        <taxon>Pseudomonadati</taxon>
        <taxon>Pseudomonadota</taxon>
        <taxon>Betaproteobacteria</taxon>
        <taxon>Burkholderiales</taxon>
        <taxon>Burkholderiaceae</taxon>
        <taxon>Cupriavidus</taxon>
    </lineage>
</organism>
<dbReference type="EC" id="2.1.2.10" evidence="1"/>
<dbReference type="EMBL" id="AM260479">
    <property type="protein sequence ID" value="CAJ94676.1"/>
    <property type="molecule type" value="Genomic_DNA"/>
</dbReference>
<dbReference type="RefSeq" id="WP_011616220.1">
    <property type="nucleotide sequence ID" value="NC_008313.1"/>
</dbReference>
<dbReference type="SMR" id="Q0K5P5"/>
<dbReference type="STRING" id="381666.H16_A3619"/>
<dbReference type="KEGG" id="reh:H16_A3619"/>
<dbReference type="PATRIC" id="fig|381666.6.peg.4007"/>
<dbReference type="eggNOG" id="COG0404">
    <property type="taxonomic scope" value="Bacteria"/>
</dbReference>
<dbReference type="HOGENOM" id="CLU_007884_10_2_4"/>
<dbReference type="OrthoDB" id="9774591at2"/>
<dbReference type="Proteomes" id="UP000008210">
    <property type="component" value="Chromosome 1"/>
</dbReference>
<dbReference type="GO" id="GO:0005829">
    <property type="term" value="C:cytosol"/>
    <property type="evidence" value="ECO:0007669"/>
    <property type="project" value="TreeGrafter"/>
</dbReference>
<dbReference type="GO" id="GO:0005960">
    <property type="term" value="C:glycine cleavage complex"/>
    <property type="evidence" value="ECO:0007669"/>
    <property type="project" value="InterPro"/>
</dbReference>
<dbReference type="GO" id="GO:0004047">
    <property type="term" value="F:aminomethyltransferase activity"/>
    <property type="evidence" value="ECO:0007669"/>
    <property type="project" value="UniProtKB-UniRule"/>
</dbReference>
<dbReference type="GO" id="GO:0008483">
    <property type="term" value="F:transaminase activity"/>
    <property type="evidence" value="ECO:0007669"/>
    <property type="project" value="UniProtKB-KW"/>
</dbReference>
<dbReference type="GO" id="GO:0019464">
    <property type="term" value="P:glycine decarboxylation via glycine cleavage system"/>
    <property type="evidence" value="ECO:0007669"/>
    <property type="project" value="UniProtKB-UniRule"/>
</dbReference>
<dbReference type="FunFam" id="3.30.70.1400:FF:000001">
    <property type="entry name" value="Aminomethyltransferase"/>
    <property type="match status" value="1"/>
</dbReference>
<dbReference type="FunFam" id="4.10.1250.10:FF:000001">
    <property type="entry name" value="Aminomethyltransferase"/>
    <property type="match status" value="1"/>
</dbReference>
<dbReference type="Gene3D" id="2.40.30.110">
    <property type="entry name" value="Aminomethyltransferase beta-barrel domains"/>
    <property type="match status" value="1"/>
</dbReference>
<dbReference type="Gene3D" id="3.30.70.1400">
    <property type="entry name" value="Aminomethyltransferase beta-barrel domains"/>
    <property type="match status" value="1"/>
</dbReference>
<dbReference type="Gene3D" id="4.10.1250.10">
    <property type="entry name" value="Aminomethyltransferase fragment"/>
    <property type="match status" value="1"/>
</dbReference>
<dbReference type="Gene3D" id="3.30.1360.120">
    <property type="entry name" value="Probable tRNA modification gtpase trme, domain 1"/>
    <property type="match status" value="1"/>
</dbReference>
<dbReference type="HAMAP" id="MF_00259">
    <property type="entry name" value="GcvT"/>
    <property type="match status" value="1"/>
</dbReference>
<dbReference type="InterPro" id="IPR006223">
    <property type="entry name" value="GCS_T"/>
</dbReference>
<dbReference type="InterPro" id="IPR022903">
    <property type="entry name" value="GCS_T_bac"/>
</dbReference>
<dbReference type="InterPro" id="IPR013977">
    <property type="entry name" value="GCST_C"/>
</dbReference>
<dbReference type="InterPro" id="IPR006222">
    <property type="entry name" value="GCV_T_N"/>
</dbReference>
<dbReference type="InterPro" id="IPR028896">
    <property type="entry name" value="GcvT/YgfZ/DmdA"/>
</dbReference>
<dbReference type="InterPro" id="IPR029043">
    <property type="entry name" value="GcvT/YgfZ_C"/>
</dbReference>
<dbReference type="InterPro" id="IPR027266">
    <property type="entry name" value="TrmE/GcvT_dom1"/>
</dbReference>
<dbReference type="NCBIfam" id="TIGR00528">
    <property type="entry name" value="gcvT"/>
    <property type="match status" value="1"/>
</dbReference>
<dbReference type="NCBIfam" id="NF001567">
    <property type="entry name" value="PRK00389.1"/>
    <property type="match status" value="1"/>
</dbReference>
<dbReference type="PANTHER" id="PTHR43757">
    <property type="entry name" value="AMINOMETHYLTRANSFERASE"/>
    <property type="match status" value="1"/>
</dbReference>
<dbReference type="PANTHER" id="PTHR43757:SF2">
    <property type="entry name" value="AMINOMETHYLTRANSFERASE, MITOCHONDRIAL"/>
    <property type="match status" value="1"/>
</dbReference>
<dbReference type="Pfam" id="PF01571">
    <property type="entry name" value="GCV_T"/>
    <property type="match status" value="1"/>
</dbReference>
<dbReference type="Pfam" id="PF08669">
    <property type="entry name" value="GCV_T_C"/>
    <property type="match status" value="1"/>
</dbReference>
<dbReference type="PIRSF" id="PIRSF006487">
    <property type="entry name" value="GcvT"/>
    <property type="match status" value="1"/>
</dbReference>
<dbReference type="SUPFAM" id="SSF101790">
    <property type="entry name" value="Aminomethyltransferase beta-barrel domain"/>
    <property type="match status" value="1"/>
</dbReference>
<dbReference type="SUPFAM" id="SSF103025">
    <property type="entry name" value="Folate-binding domain"/>
    <property type="match status" value="1"/>
</dbReference>
<reference key="1">
    <citation type="journal article" date="2006" name="Nat. Biotechnol.">
        <title>Genome sequence of the bioplastic-producing 'Knallgas' bacterium Ralstonia eutropha H16.</title>
        <authorList>
            <person name="Pohlmann A."/>
            <person name="Fricke W.F."/>
            <person name="Reinecke F."/>
            <person name="Kusian B."/>
            <person name="Liesegang H."/>
            <person name="Cramm R."/>
            <person name="Eitinger T."/>
            <person name="Ewering C."/>
            <person name="Poetter M."/>
            <person name="Schwartz E."/>
            <person name="Strittmatter A."/>
            <person name="Voss I."/>
            <person name="Gottschalk G."/>
            <person name="Steinbuechel A."/>
            <person name="Friedrich B."/>
            <person name="Bowien B."/>
        </authorList>
    </citation>
    <scope>NUCLEOTIDE SEQUENCE [LARGE SCALE GENOMIC DNA]</scope>
    <source>
        <strain>ATCC 17699 / DSM 428 / KCTC 22496 / NCIMB 10442 / H16 / Stanier 337</strain>
    </source>
</reference>
<proteinExistence type="inferred from homology"/>
<accession>Q0K5P5</accession>
<sequence>MTLQATPLNAIHRALGARMVDFGGWDMPVNYGSQIEEHNAVRTDAGMFDVSHMCVVDLAGANTRSFLRGLLANNVDKLQTPGKALYSCMLDEKGGVIDDLIVYFFAEDRFRLVVNASTALGDIEWIRARNAATGSDVTITPRREDVAPAGVQPLAIVAVQGPNARTKVWSTFPSTQPSDTLKPFNAAVVQDPALGEIMVARTGYTGEDGFELVVPAENVAAIWEKLNAAGVRPAGLGARDTLRLEAGMNLYGQDMDINTSPLDAGLAWTVDLQSERDFTGKAALAAAGSRQQFLGLILRDKGGVLRAHQKVITPAGDGEITSGTFSPSLSQSIAFARLPKDVAVGDTVQVEIRDRKLNATVVKLPFVRNGKALVS</sequence>
<gene>
    <name evidence="1" type="primary">gcvT</name>
    <name type="ordered locus">H16_A3619</name>
</gene>
<keyword id="KW-0032">Aminotransferase</keyword>
<keyword id="KW-1185">Reference proteome</keyword>
<keyword id="KW-0808">Transferase</keyword>
<feature type="chain" id="PRO_1000114105" description="Aminomethyltransferase">
    <location>
        <begin position="1"/>
        <end position="375"/>
    </location>
</feature>